<gene>
    <name evidence="1" type="primary">rpsM</name>
    <name type="ordered locus">ASA_4065</name>
</gene>
<feature type="chain" id="PRO_0000306555" description="Small ribosomal subunit protein uS13">
    <location>
        <begin position="1"/>
        <end position="118"/>
    </location>
</feature>
<feature type="region of interest" description="Disordered" evidence="2">
    <location>
        <begin position="94"/>
        <end position="118"/>
    </location>
</feature>
<accession>A4SSY4</accession>
<sequence>MARIAGINIPDHKHAVIALTAIYGVGRTRSKAICAAAGIAENVKIKDLDEAQIESLREQVGKFTVEGDLRRQISMNIKRLMDLGCYRGLRHRRSLPVRGQRTKTNARTRKGPRKAIKK</sequence>
<evidence type="ECO:0000255" key="1">
    <source>
        <dbReference type="HAMAP-Rule" id="MF_01315"/>
    </source>
</evidence>
<evidence type="ECO:0000256" key="2">
    <source>
        <dbReference type="SAM" id="MobiDB-lite"/>
    </source>
</evidence>
<evidence type="ECO:0000305" key="3"/>
<organism>
    <name type="scientific">Aeromonas salmonicida (strain A449)</name>
    <dbReference type="NCBI Taxonomy" id="382245"/>
    <lineage>
        <taxon>Bacteria</taxon>
        <taxon>Pseudomonadati</taxon>
        <taxon>Pseudomonadota</taxon>
        <taxon>Gammaproteobacteria</taxon>
        <taxon>Aeromonadales</taxon>
        <taxon>Aeromonadaceae</taxon>
        <taxon>Aeromonas</taxon>
    </lineage>
</organism>
<dbReference type="EMBL" id="CP000644">
    <property type="protein sequence ID" value="ABO92006.1"/>
    <property type="molecule type" value="Genomic_DNA"/>
</dbReference>
<dbReference type="RefSeq" id="WP_005307991.1">
    <property type="nucleotide sequence ID" value="NC_009348.1"/>
</dbReference>
<dbReference type="SMR" id="A4SSY4"/>
<dbReference type="STRING" id="29491.GCA_000820065_03486"/>
<dbReference type="GeneID" id="97858414"/>
<dbReference type="KEGG" id="asa:ASA_4065"/>
<dbReference type="eggNOG" id="COG0099">
    <property type="taxonomic scope" value="Bacteria"/>
</dbReference>
<dbReference type="HOGENOM" id="CLU_103849_1_2_6"/>
<dbReference type="Proteomes" id="UP000000225">
    <property type="component" value="Chromosome"/>
</dbReference>
<dbReference type="GO" id="GO:0005829">
    <property type="term" value="C:cytosol"/>
    <property type="evidence" value="ECO:0007669"/>
    <property type="project" value="TreeGrafter"/>
</dbReference>
<dbReference type="GO" id="GO:0015935">
    <property type="term" value="C:small ribosomal subunit"/>
    <property type="evidence" value="ECO:0007669"/>
    <property type="project" value="TreeGrafter"/>
</dbReference>
<dbReference type="GO" id="GO:0019843">
    <property type="term" value="F:rRNA binding"/>
    <property type="evidence" value="ECO:0007669"/>
    <property type="project" value="UniProtKB-UniRule"/>
</dbReference>
<dbReference type="GO" id="GO:0003735">
    <property type="term" value="F:structural constituent of ribosome"/>
    <property type="evidence" value="ECO:0007669"/>
    <property type="project" value="InterPro"/>
</dbReference>
<dbReference type="GO" id="GO:0000049">
    <property type="term" value="F:tRNA binding"/>
    <property type="evidence" value="ECO:0007669"/>
    <property type="project" value="UniProtKB-UniRule"/>
</dbReference>
<dbReference type="GO" id="GO:0006412">
    <property type="term" value="P:translation"/>
    <property type="evidence" value="ECO:0007669"/>
    <property type="project" value="UniProtKB-UniRule"/>
</dbReference>
<dbReference type="FunFam" id="1.10.8.50:FF:000001">
    <property type="entry name" value="30S ribosomal protein S13"/>
    <property type="match status" value="1"/>
</dbReference>
<dbReference type="FunFam" id="4.10.910.10:FF:000001">
    <property type="entry name" value="30S ribosomal protein S13"/>
    <property type="match status" value="1"/>
</dbReference>
<dbReference type="Gene3D" id="1.10.8.50">
    <property type="match status" value="1"/>
</dbReference>
<dbReference type="Gene3D" id="4.10.910.10">
    <property type="entry name" value="30s ribosomal protein s13, domain 2"/>
    <property type="match status" value="1"/>
</dbReference>
<dbReference type="HAMAP" id="MF_01315">
    <property type="entry name" value="Ribosomal_uS13"/>
    <property type="match status" value="1"/>
</dbReference>
<dbReference type="InterPro" id="IPR027437">
    <property type="entry name" value="Rbsml_uS13_C"/>
</dbReference>
<dbReference type="InterPro" id="IPR001892">
    <property type="entry name" value="Ribosomal_uS13"/>
</dbReference>
<dbReference type="InterPro" id="IPR010979">
    <property type="entry name" value="Ribosomal_uS13-like_H2TH"/>
</dbReference>
<dbReference type="InterPro" id="IPR019980">
    <property type="entry name" value="Ribosomal_uS13_bac-type"/>
</dbReference>
<dbReference type="InterPro" id="IPR018269">
    <property type="entry name" value="Ribosomal_uS13_CS"/>
</dbReference>
<dbReference type="NCBIfam" id="TIGR03631">
    <property type="entry name" value="uS13_bact"/>
    <property type="match status" value="1"/>
</dbReference>
<dbReference type="PANTHER" id="PTHR10871">
    <property type="entry name" value="30S RIBOSOMAL PROTEIN S13/40S RIBOSOMAL PROTEIN S18"/>
    <property type="match status" value="1"/>
</dbReference>
<dbReference type="PANTHER" id="PTHR10871:SF1">
    <property type="entry name" value="SMALL RIBOSOMAL SUBUNIT PROTEIN US13M"/>
    <property type="match status" value="1"/>
</dbReference>
<dbReference type="Pfam" id="PF00416">
    <property type="entry name" value="Ribosomal_S13"/>
    <property type="match status" value="1"/>
</dbReference>
<dbReference type="PIRSF" id="PIRSF002134">
    <property type="entry name" value="Ribosomal_S13"/>
    <property type="match status" value="1"/>
</dbReference>
<dbReference type="SUPFAM" id="SSF46946">
    <property type="entry name" value="S13-like H2TH domain"/>
    <property type="match status" value="1"/>
</dbReference>
<dbReference type="PROSITE" id="PS00646">
    <property type="entry name" value="RIBOSOMAL_S13_1"/>
    <property type="match status" value="1"/>
</dbReference>
<dbReference type="PROSITE" id="PS50159">
    <property type="entry name" value="RIBOSOMAL_S13_2"/>
    <property type="match status" value="1"/>
</dbReference>
<comment type="function">
    <text evidence="1">Located at the top of the head of the 30S subunit, it contacts several helices of the 16S rRNA. In the 70S ribosome it contacts the 23S rRNA (bridge B1a) and protein L5 of the 50S subunit (bridge B1b), connecting the 2 subunits; these bridges are implicated in subunit movement. Contacts the tRNAs in the A and P-sites.</text>
</comment>
<comment type="subunit">
    <text evidence="1">Part of the 30S ribosomal subunit. Forms a loose heterodimer with protein S19. Forms two bridges to the 50S subunit in the 70S ribosome.</text>
</comment>
<comment type="similarity">
    <text evidence="1">Belongs to the universal ribosomal protein uS13 family.</text>
</comment>
<name>RS13_AERS4</name>
<keyword id="KW-0687">Ribonucleoprotein</keyword>
<keyword id="KW-0689">Ribosomal protein</keyword>
<keyword id="KW-0694">RNA-binding</keyword>
<keyword id="KW-0699">rRNA-binding</keyword>
<keyword id="KW-0820">tRNA-binding</keyword>
<reference key="1">
    <citation type="journal article" date="2008" name="BMC Genomics">
        <title>The genome of Aeromonas salmonicida subsp. salmonicida A449: insights into the evolution of a fish pathogen.</title>
        <authorList>
            <person name="Reith M.E."/>
            <person name="Singh R.K."/>
            <person name="Curtis B."/>
            <person name="Boyd J.M."/>
            <person name="Bouevitch A."/>
            <person name="Kimball J."/>
            <person name="Munholland J."/>
            <person name="Murphy C."/>
            <person name="Sarty D."/>
            <person name="Williams J."/>
            <person name="Nash J.H."/>
            <person name="Johnson S.C."/>
            <person name="Brown L.L."/>
        </authorList>
    </citation>
    <scope>NUCLEOTIDE SEQUENCE [LARGE SCALE GENOMIC DNA]</scope>
    <source>
        <strain>A449</strain>
    </source>
</reference>
<proteinExistence type="inferred from homology"/>
<protein>
    <recommendedName>
        <fullName evidence="1">Small ribosomal subunit protein uS13</fullName>
    </recommendedName>
    <alternativeName>
        <fullName evidence="3">30S ribosomal protein S13</fullName>
    </alternativeName>
</protein>